<keyword id="KW-0186">Copper</keyword>
<keyword id="KW-0378">Hydrolase</keyword>
<keyword id="KW-0479">Metal-binding</keyword>
<keyword id="KW-0560">Oxidoreductase</keyword>
<keyword id="KW-0808">Transferase</keyword>
<keyword id="KW-0862">Zinc</keyword>
<evidence type="ECO:0000250" key="1">
    <source>
        <dbReference type="UniProtKB" id="P33644"/>
    </source>
</evidence>
<evidence type="ECO:0000250" key="2">
    <source>
        <dbReference type="UniProtKB" id="P84138"/>
    </source>
</evidence>
<evidence type="ECO:0000250" key="3">
    <source>
        <dbReference type="UniProtKB" id="Q1EIR0"/>
    </source>
</evidence>
<evidence type="ECO:0000305" key="4"/>
<dbReference type="EC" id="2.4.2.1" evidence="2"/>
<dbReference type="EC" id="3.5.4.4" evidence="2"/>
<dbReference type="EC" id="2.4.2.28" evidence="2"/>
<dbReference type="EMBL" id="BA000018">
    <property type="protein sequence ID" value="BAB42282.1"/>
    <property type="molecule type" value="Genomic_DNA"/>
</dbReference>
<dbReference type="PIR" id="F89890">
    <property type="entry name" value="F89890"/>
</dbReference>
<dbReference type="SMR" id="Q7A617"/>
<dbReference type="EnsemblBacteria" id="BAB42282">
    <property type="protein sequence ID" value="BAB42282"/>
    <property type="gene ID" value="BAB42282"/>
</dbReference>
<dbReference type="KEGG" id="sau:SA1030"/>
<dbReference type="HOGENOM" id="CLU_065784_0_0_9"/>
<dbReference type="GO" id="GO:0004000">
    <property type="term" value="F:adenosine deaminase activity"/>
    <property type="evidence" value="ECO:0007669"/>
    <property type="project" value="RHEA"/>
</dbReference>
<dbReference type="GO" id="GO:0005507">
    <property type="term" value="F:copper ion binding"/>
    <property type="evidence" value="ECO:0007669"/>
    <property type="project" value="TreeGrafter"/>
</dbReference>
<dbReference type="GO" id="GO:0016491">
    <property type="term" value="F:oxidoreductase activity"/>
    <property type="evidence" value="ECO:0007669"/>
    <property type="project" value="UniProtKB-KW"/>
</dbReference>
<dbReference type="GO" id="GO:0017061">
    <property type="term" value="F:S-methyl-5-thioadenosine phosphorylase activity"/>
    <property type="evidence" value="ECO:0007669"/>
    <property type="project" value="UniProtKB-EC"/>
</dbReference>
<dbReference type="CDD" id="cd16833">
    <property type="entry name" value="YfiH"/>
    <property type="match status" value="1"/>
</dbReference>
<dbReference type="Gene3D" id="3.60.140.10">
    <property type="entry name" value="CNF1/YfiH-like putative cysteine hydrolases"/>
    <property type="match status" value="1"/>
</dbReference>
<dbReference type="InterPro" id="IPR003730">
    <property type="entry name" value="Cu_polyphenol_OxRdtase"/>
</dbReference>
<dbReference type="InterPro" id="IPR038371">
    <property type="entry name" value="Cu_polyphenol_OxRdtase_sf"/>
</dbReference>
<dbReference type="InterPro" id="IPR011324">
    <property type="entry name" value="Cytotoxic_necrot_fac-like_cat"/>
</dbReference>
<dbReference type="NCBIfam" id="TIGR00726">
    <property type="entry name" value="peptidoglycan editing factor PgeF"/>
    <property type="match status" value="1"/>
</dbReference>
<dbReference type="PANTHER" id="PTHR30616:SF2">
    <property type="entry name" value="PURINE NUCLEOSIDE PHOSPHORYLASE LACC1"/>
    <property type="match status" value="1"/>
</dbReference>
<dbReference type="PANTHER" id="PTHR30616">
    <property type="entry name" value="UNCHARACTERIZED PROTEIN YFIH"/>
    <property type="match status" value="1"/>
</dbReference>
<dbReference type="Pfam" id="PF02578">
    <property type="entry name" value="Cu-oxidase_4"/>
    <property type="match status" value="1"/>
</dbReference>
<dbReference type="SUPFAM" id="SSF64438">
    <property type="entry name" value="CNF1/YfiH-like putative cysteine hydrolases"/>
    <property type="match status" value="1"/>
</dbReference>
<accession>Q7A617</accession>
<comment type="function">
    <text evidence="2">Purine nucleoside enzyme that catalyzes the phosphorolysis of adenosine and inosine nucleosides, yielding D-ribose 1-phosphate and the respective free bases, adenine and hypoxanthine. Also catalyzes the phosphorolysis of S-methyl-5'-thioadenosine into adenine and S-methyl-5-thio-alpha-D-ribose 1-phosphate. Also has adenosine deaminase activity.</text>
</comment>
<comment type="catalytic activity">
    <reaction evidence="2">
        <text>adenosine + phosphate = alpha-D-ribose 1-phosphate + adenine</text>
        <dbReference type="Rhea" id="RHEA:27642"/>
        <dbReference type="ChEBI" id="CHEBI:16335"/>
        <dbReference type="ChEBI" id="CHEBI:16708"/>
        <dbReference type="ChEBI" id="CHEBI:43474"/>
        <dbReference type="ChEBI" id="CHEBI:57720"/>
        <dbReference type="EC" id="2.4.2.1"/>
    </reaction>
    <physiologicalReaction direction="left-to-right" evidence="2">
        <dbReference type="Rhea" id="RHEA:27643"/>
    </physiologicalReaction>
</comment>
<comment type="catalytic activity">
    <reaction evidence="2">
        <text>S-methyl-5'-thioadenosine + phosphate = 5-(methylsulfanyl)-alpha-D-ribose 1-phosphate + adenine</text>
        <dbReference type="Rhea" id="RHEA:11852"/>
        <dbReference type="ChEBI" id="CHEBI:16708"/>
        <dbReference type="ChEBI" id="CHEBI:17509"/>
        <dbReference type="ChEBI" id="CHEBI:43474"/>
        <dbReference type="ChEBI" id="CHEBI:58533"/>
        <dbReference type="EC" id="2.4.2.28"/>
    </reaction>
    <physiologicalReaction direction="left-to-right" evidence="2">
        <dbReference type="Rhea" id="RHEA:11853"/>
    </physiologicalReaction>
</comment>
<comment type="catalytic activity">
    <reaction evidence="2">
        <text>inosine + phosphate = alpha-D-ribose 1-phosphate + hypoxanthine</text>
        <dbReference type="Rhea" id="RHEA:27646"/>
        <dbReference type="ChEBI" id="CHEBI:17368"/>
        <dbReference type="ChEBI" id="CHEBI:17596"/>
        <dbReference type="ChEBI" id="CHEBI:43474"/>
        <dbReference type="ChEBI" id="CHEBI:57720"/>
        <dbReference type="EC" id="2.4.2.1"/>
    </reaction>
    <physiologicalReaction direction="left-to-right" evidence="2">
        <dbReference type="Rhea" id="RHEA:27647"/>
    </physiologicalReaction>
</comment>
<comment type="catalytic activity">
    <reaction evidence="2">
        <text>adenosine + H2O + H(+) = inosine + NH4(+)</text>
        <dbReference type="Rhea" id="RHEA:24408"/>
        <dbReference type="ChEBI" id="CHEBI:15377"/>
        <dbReference type="ChEBI" id="CHEBI:15378"/>
        <dbReference type="ChEBI" id="CHEBI:16335"/>
        <dbReference type="ChEBI" id="CHEBI:17596"/>
        <dbReference type="ChEBI" id="CHEBI:28938"/>
        <dbReference type="EC" id="3.5.4.4"/>
    </reaction>
    <physiologicalReaction direction="left-to-right" evidence="2">
        <dbReference type="Rhea" id="RHEA:24409"/>
    </physiologicalReaction>
</comment>
<comment type="cofactor">
    <cofactor evidence="1">
        <name>Cu(2+)</name>
        <dbReference type="ChEBI" id="CHEBI:29036"/>
    </cofactor>
    <cofactor evidence="2">
        <name>Zn(2+)</name>
        <dbReference type="ChEBI" id="CHEBI:29105"/>
    </cofactor>
</comment>
<comment type="subunit">
    <text evidence="3">Homodimer.</text>
</comment>
<comment type="similarity">
    <text evidence="4">Belongs to the purine nucleoside phosphorylase YfiH/LACC1 family.</text>
</comment>
<feature type="chain" id="PRO_0000163173" description="Purine nucleoside phosphorylase SA1030">
    <location>
        <begin position="1"/>
        <end position="263"/>
    </location>
</feature>
<feature type="binding site" evidence="2">
    <location>
        <position position="79"/>
    </location>
    <ligand>
        <name>Zn(2+)</name>
        <dbReference type="ChEBI" id="CHEBI:29105"/>
        <note>catalytic</note>
    </ligand>
</feature>
<feature type="binding site" evidence="2">
    <location>
        <position position="124"/>
    </location>
    <ligand>
        <name>Zn(2+)</name>
        <dbReference type="ChEBI" id="CHEBI:29105"/>
        <note>catalytic</note>
    </ligand>
</feature>
<feature type="binding site" evidence="2">
    <location>
        <position position="141"/>
    </location>
    <ligand>
        <name>Zn(2+)</name>
        <dbReference type="ChEBI" id="CHEBI:29105"/>
        <note>catalytic</note>
    </ligand>
</feature>
<proteinExistence type="inferred from homology"/>
<gene>
    <name type="ordered locus">SA1030</name>
</gene>
<name>PURNU_STAAN</name>
<reference key="1">
    <citation type="journal article" date="2001" name="Lancet">
        <title>Whole genome sequencing of meticillin-resistant Staphylococcus aureus.</title>
        <authorList>
            <person name="Kuroda M."/>
            <person name="Ohta T."/>
            <person name="Uchiyama I."/>
            <person name="Baba T."/>
            <person name="Yuzawa H."/>
            <person name="Kobayashi I."/>
            <person name="Cui L."/>
            <person name="Oguchi A."/>
            <person name="Aoki K."/>
            <person name="Nagai Y."/>
            <person name="Lian J.-Q."/>
            <person name="Ito T."/>
            <person name="Kanamori M."/>
            <person name="Matsumaru H."/>
            <person name="Maruyama A."/>
            <person name="Murakami H."/>
            <person name="Hosoyama A."/>
            <person name="Mizutani-Ui Y."/>
            <person name="Takahashi N.K."/>
            <person name="Sawano T."/>
            <person name="Inoue R."/>
            <person name="Kaito C."/>
            <person name="Sekimizu K."/>
            <person name="Hirakawa H."/>
            <person name="Kuhara S."/>
            <person name="Goto S."/>
            <person name="Yabuzaki J."/>
            <person name="Kanehisa M."/>
            <person name="Yamashita A."/>
            <person name="Oshima K."/>
            <person name="Furuya K."/>
            <person name="Yoshino C."/>
            <person name="Shiba T."/>
            <person name="Hattori M."/>
            <person name="Ogasawara N."/>
            <person name="Hayashi H."/>
            <person name="Hiramatsu K."/>
        </authorList>
    </citation>
    <scope>NUCLEOTIDE SEQUENCE [LARGE SCALE GENOMIC DNA]</scope>
    <source>
        <strain>N315</strain>
    </source>
</reference>
<organism>
    <name type="scientific">Staphylococcus aureus (strain N315)</name>
    <dbReference type="NCBI Taxonomy" id="158879"/>
    <lineage>
        <taxon>Bacteria</taxon>
        <taxon>Bacillati</taxon>
        <taxon>Bacillota</taxon>
        <taxon>Bacilli</taxon>
        <taxon>Bacillales</taxon>
        <taxon>Staphylococcaceae</taxon>
        <taxon>Staphylococcus</taxon>
    </lineage>
</organism>
<protein>
    <recommendedName>
        <fullName>Purine nucleoside phosphorylase SA1030</fullName>
        <ecNumber evidence="2">2.4.2.1</ecNumber>
    </recommendedName>
    <alternativeName>
        <fullName>Adenosine deaminase SA1030</fullName>
        <ecNumber evidence="2">3.5.4.4</ecNumber>
    </alternativeName>
    <alternativeName>
        <fullName>S-methyl-5'-thioadenosine phosphorylase SA1030</fullName>
        <ecNumber evidence="2">2.4.2.28</ecNumber>
    </alternativeName>
</protein>
<sequence length="263" mass="30257">MNDNFKKQPHHLIYEELLQQGITLGITTRGDGLSDYPKNAFNMARYIDDRPYNITQHQLQLAEEIAFDRKNWVFPIQTHENKVACITKDDIGTNIDTLTDALHGIDAMYTYDSNVLLTMCYADCVPVYFYSTKHHFIALAHAGWRGTYTEIVKEVLKHVNFDLKDLHVVIGPSTSSSYEINDDIKNKFETLPIDSANYIETRGRDRHGIDLKKANAELLNYYGVPKENIYTTAYATSEHLELFFSYRLEKGQTGRMLAFIGQQ</sequence>